<evidence type="ECO:0000250" key="1"/>
<evidence type="ECO:0000269" key="2">
    <source>
    </source>
</evidence>
<evidence type="ECO:0000269" key="3">
    <source>
    </source>
</evidence>
<evidence type="ECO:0000269" key="4">
    <source>
    </source>
</evidence>
<evidence type="ECO:0000305" key="5"/>
<dbReference type="EMBL" id="AE014297">
    <property type="protein sequence ID" value="AAF51976.1"/>
    <property type="molecule type" value="Genomic_DNA"/>
</dbReference>
<dbReference type="EMBL" id="AY075500">
    <property type="protein sequence ID" value="AAL68310.1"/>
    <property type="molecule type" value="mRNA"/>
</dbReference>
<dbReference type="RefSeq" id="NP_649569.1">
    <property type="nucleotide sequence ID" value="NM_141312.4"/>
</dbReference>
<dbReference type="SMR" id="Q9VNG0"/>
<dbReference type="BioGRID" id="65902">
    <property type="interactions" value="31"/>
</dbReference>
<dbReference type="ComplexPortal" id="CPX-2308">
    <property type="entry name" value="Core mediator complex"/>
</dbReference>
<dbReference type="FunCoup" id="Q9VNG0">
    <property type="interactions" value="1998"/>
</dbReference>
<dbReference type="IntAct" id="Q9VNG0">
    <property type="interactions" value="63"/>
</dbReference>
<dbReference type="STRING" id="7227.FBpp0078361"/>
<dbReference type="GlyGen" id="Q9VNG0">
    <property type="glycosylation" value="1 site"/>
</dbReference>
<dbReference type="PaxDb" id="7227-FBpp0078361"/>
<dbReference type="DNASU" id="40696"/>
<dbReference type="EnsemblMetazoa" id="FBtr0078712">
    <property type="protein sequence ID" value="FBpp0078361"/>
    <property type="gene ID" value="FBgn0037359"/>
</dbReference>
<dbReference type="GeneID" id="40696"/>
<dbReference type="KEGG" id="dme:Dmel_CG1245"/>
<dbReference type="AGR" id="FB:FBgn0037359"/>
<dbReference type="CTD" id="9442"/>
<dbReference type="FlyBase" id="FBgn0037359">
    <property type="gene designation" value="MED27"/>
</dbReference>
<dbReference type="VEuPathDB" id="VectorBase:FBgn0037359"/>
<dbReference type="eggNOG" id="ENOG502QS6H">
    <property type="taxonomic scope" value="Eukaryota"/>
</dbReference>
<dbReference type="GeneTree" id="ENSGT00390000012207"/>
<dbReference type="HOGENOM" id="CLU_056015_0_0_1"/>
<dbReference type="InParanoid" id="Q9VNG0"/>
<dbReference type="OMA" id="FHEDCRN"/>
<dbReference type="OrthoDB" id="1868004at2759"/>
<dbReference type="PhylomeDB" id="Q9VNG0"/>
<dbReference type="Reactome" id="R-DME-9841922">
    <property type="pathway name" value="MLL4 and MLL3 complexes regulate expression of PPARG target genes in adipogenesis and hepatic steatosis"/>
</dbReference>
<dbReference type="BioGRID-ORCS" id="40696">
    <property type="hits" value="0 hits in 1 CRISPR screen"/>
</dbReference>
<dbReference type="GenomeRNAi" id="40696"/>
<dbReference type="PRO" id="PR:Q9VNG0"/>
<dbReference type="Proteomes" id="UP000000803">
    <property type="component" value="Chromosome 3R"/>
</dbReference>
<dbReference type="Bgee" id="FBgn0037359">
    <property type="expression patterns" value="Expressed in adult anterior midgut class I enteroendocrine cell in adult midgut (Drosophila) and 60 other cell types or tissues"/>
</dbReference>
<dbReference type="GO" id="GO:0016592">
    <property type="term" value="C:mediator complex"/>
    <property type="evidence" value="ECO:0000314"/>
    <property type="project" value="UniProtKB"/>
</dbReference>
<dbReference type="GO" id="GO:0005634">
    <property type="term" value="C:nucleus"/>
    <property type="evidence" value="ECO:0000314"/>
    <property type="project" value="FlyBase"/>
</dbReference>
<dbReference type="GO" id="GO:0003713">
    <property type="term" value="F:transcription coactivator activity"/>
    <property type="evidence" value="ECO:0000318"/>
    <property type="project" value="GO_Central"/>
</dbReference>
<dbReference type="GO" id="GO:0003712">
    <property type="term" value="F:transcription coregulator activity"/>
    <property type="evidence" value="ECO:0000314"/>
    <property type="project" value="UniProtKB"/>
</dbReference>
<dbReference type="GO" id="GO:0006357">
    <property type="term" value="P:regulation of transcription by RNA polymerase II"/>
    <property type="evidence" value="ECO:0000314"/>
    <property type="project" value="UniProtKB"/>
</dbReference>
<dbReference type="InterPro" id="IPR021627">
    <property type="entry name" value="Mediator_Med27"/>
</dbReference>
<dbReference type="PANTHER" id="PTHR13130">
    <property type="entry name" value="34 KDA TRANSCRIPTIONAL CO-ACTIVATOR-RELATED"/>
    <property type="match status" value="1"/>
</dbReference>
<dbReference type="PANTHER" id="PTHR13130:SF4">
    <property type="entry name" value="MEDIATOR OF RNA POLYMERASE II TRANSCRIPTION SUBUNIT 27"/>
    <property type="match status" value="1"/>
</dbReference>
<dbReference type="Pfam" id="PF11571">
    <property type="entry name" value="Med27"/>
    <property type="match status" value="1"/>
</dbReference>
<gene>
    <name type="primary">MED27</name>
    <name type="synonym">Trap37</name>
    <name type="ORF">CG1245</name>
</gene>
<reference key="1">
    <citation type="journal article" date="2000" name="Science">
        <title>The genome sequence of Drosophila melanogaster.</title>
        <authorList>
            <person name="Adams M.D."/>
            <person name="Celniker S.E."/>
            <person name="Holt R.A."/>
            <person name="Evans C.A."/>
            <person name="Gocayne J.D."/>
            <person name="Amanatides P.G."/>
            <person name="Scherer S.E."/>
            <person name="Li P.W."/>
            <person name="Hoskins R.A."/>
            <person name="Galle R.F."/>
            <person name="George R.A."/>
            <person name="Lewis S.E."/>
            <person name="Richards S."/>
            <person name="Ashburner M."/>
            <person name="Henderson S.N."/>
            <person name="Sutton G.G."/>
            <person name="Wortman J.R."/>
            <person name="Yandell M.D."/>
            <person name="Zhang Q."/>
            <person name="Chen L.X."/>
            <person name="Brandon R.C."/>
            <person name="Rogers Y.-H.C."/>
            <person name="Blazej R.G."/>
            <person name="Champe M."/>
            <person name="Pfeiffer B.D."/>
            <person name="Wan K.H."/>
            <person name="Doyle C."/>
            <person name="Baxter E.G."/>
            <person name="Helt G."/>
            <person name="Nelson C.R."/>
            <person name="Miklos G.L.G."/>
            <person name="Abril J.F."/>
            <person name="Agbayani A."/>
            <person name="An H.-J."/>
            <person name="Andrews-Pfannkoch C."/>
            <person name="Baldwin D."/>
            <person name="Ballew R.M."/>
            <person name="Basu A."/>
            <person name="Baxendale J."/>
            <person name="Bayraktaroglu L."/>
            <person name="Beasley E.M."/>
            <person name="Beeson K.Y."/>
            <person name="Benos P.V."/>
            <person name="Berman B.P."/>
            <person name="Bhandari D."/>
            <person name="Bolshakov S."/>
            <person name="Borkova D."/>
            <person name="Botchan M.R."/>
            <person name="Bouck J."/>
            <person name="Brokstein P."/>
            <person name="Brottier P."/>
            <person name="Burtis K.C."/>
            <person name="Busam D.A."/>
            <person name="Butler H."/>
            <person name="Cadieu E."/>
            <person name="Center A."/>
            <person name="Chandra I."/>
            <person name="Cherry J.M."/>
            <person name="Cawley S."/>
            <person name="Dahlke C."/>
            <person name="Davenport L.B."/>
            <person name="Davies P."/>
            <person name="de Pablos B."/>
            <person name="Delcher A."/>
            <person name="Deng Z."/>
            <person name="Mays A.D."/>
            <person name="Dew I."/>
            <person name="Dietz S.M."/>
            <person name="Dodson K."/>
            <person name="Doup L.E."/>
            <person name="Downes M."/>
            <person name="Dugan-Rocha S."/>
            <person name="Dunkov B.C."/>
            <person name="Dunn P."/>
            <person name="Durbin K.J."/>
            <person name="Evangelista C.C."/>
            <person name="Ferraz C."/>
            <person name="Ferriera S."/>
            <person name="Fleischmann W."/>
            <person name="Fosler C."/>
            <person name="Gabrielian A.E."/>
            <person name="Garg N.S."/>
            <person name="Gelbart W.M."/>
            <person name="Glasser K."/>
            <person name="Glodek A."/>
            <person name="Gong F."/>
            <person name="Gorrell J.H."/>
            <person name="Gu Z."/>
            <person name="Guan P."/>
            <person name="Harris M."/>
            <person name="Harris N.L."/>
            <person name="Harvey D.A."/>
            <person name="Heiman T.J."/>
            <person name="Hernandez J.R."/>
            <person name="Houck J."/>
            <person name="Hostin D."/>
            <person name="Houston K.A."/>
            <person name="Howland T.J."/>
            <person name="Wei M.-H."/>
            <person name="Ibegwam C."/>
            <person name="Jalali M."/>
            <person name="Kalush F."/>
            <person name="Karpen G.H."/>
            <person name="Ke Z."/>
            <person name="Kennison J.A."/>
            <person name="Ketchum K.A."/>
            <person name="Kimmel B.E."/>
            <person name="Kodira C.D."/>
            <person name="Kraft C.L."/>
            <person name="Kravitz S."/>
            <person name="Kulp D."/>
            <person name="Lai Z."/>
            <person name="Lasko P."/>
            <person name="Lei Y."/>
            <person name="Levitsky A.A."/>
            <person name="Li J.H."/>
            <person name="Li Z."/>
            <person name="Liang Y."/>
            <person name="Lin X."/>
            <person name="Liu X."/>
            <person name="Mattei B."/>
            <person name="McIntosh T.C."/>
            <person name="McLeod M.P."/>
            <person name="McPherson D."/>
            <person name="Merkulov G."/>
            <person name="Milshina N.V."/>
            <person name="Mobarry C."/>
            <person name="Morris J."/>
            <person name="Moshrefi A."/>
            <person name="Mount S.M."/>
            <person name="Moy M."/>
            <person name="Murphy B."/>
            <person name="Murphy L."/>
            <person name="Muzny D.M."/>
            <person name="Nelson D.L."/>
            <person name="Nelson D.R."/>
            <person name="Nelson K.A."/>
            <person name="Nixon K."/>
            <person name="Nusskern D.R."/>
            <person name="Pacleb J.M."/>
            <person name="Palazzolo M."/>
            <person name="Pittman G.S."/>
            <person name="Pan S."/>
            <person name="Pollard J."/>
            <person name="Puri V."/>
            <person name="Reese M.G."/>
            <person name="Reinert K."/>
            <person name="Remington K."/>
            <person name="Saunders R.D.C."/>
            <person name="Scheeler F."/>
            <person name="Shen H."/>
            <person name="Shue B.C."/>
            <person name="Siden-Kiamos I."/>
            <person name="Simpson M."/>
            <person name="Skupski M.P."/>
            <person name="Smith T.J."/>
            <person name="Spier E."/>
            <person name="Spradling A.C."/>
            <person name="Stapleton M."/>
            <person name="Strong R."/>
            <person name="Sun E."/>
            <person name="Svirskas R."/>
            <person name="Tector C."/>
            <person name="Turner R."/>
            <person name="Venter E."/>
            <person name="Wang A.H."/>
            <person name="Wang X."/>
            <person name="Wang Z.-Y."/>
            <person name="Wassarman D.A."/>
            <person name="Weinstock G.M."/>
            <person name="Weissenbach J."/>
            <person name="Williams S.M."/>
            <person name="Woodage T."/>
            <person name="Worley K.C."/>
            <person name="Wu D."/>
            <person name="Yang S."/>
            <person name="Yao Q.A."/>
            <person name="Ye J."/>
            <person name="Yeh R.-F."/>
            <person name="Zaveri J.S."/>
            <person name="Zhan M."/>
            <person name="Zhang G."/>
            <person name="Zhao Q."/>
            <person name="Zheng L."/>
            <person name="Zheng X.H."/>
            <person name="Zhong F.N."/>
            <person name="Zhong W."/>
            <person name="Zhou X."/>
            <person name="Zhu S.C."/>
            <person name="Zhu X."/>
            <person name="Smith H.O."/>
            <person name="Gibbs R.A."/>
            <person name="Myers E.W."/>
            <person name="Rubin G.M."/>
            <person name="Venter J.C."/>
        </authorList>
    </citation>
    <scope>NUCLEOTIDE SEQUENCE [LARGE SCALE GENOMIC DNA]</scope>
    <source>
        <strain>Berkeley</strain>
    </source>
</reference>
<reference key="2">
    <citation type="journal article" date="2002" name="Genome Biol.">
        <title>Annotation of the Drosophila melanogaster euchromatic genome: a systematic review.</title>
        <authorList>
            <person name="Misra S."/>
            <person name="Crosby M.A."/>
            <person name="Mungall C.J."/>
            <person name="Matthews B.B."/>
            <person name="Campbell K.S."/>
            <person name="Hradecky P."/>
            <person name="Huang Y."/>
            <person name="Kaminker J.S."/>
            <person name="Millburn G.H."/>
            <person name="Prochnik S.E."/>
            <person name="Smith C.D."/>
            <person name="Tupy J.L."/>
            <person name="Whitfield E.J."/>
            <person name="Bayraktaroglu L."/>
            <person name="Berman B.P."/>
            <person name="Bettencourt B.R."/>
            <person name="Celniker S.E."/>
            <person name="de Grey A.D.N.J."/>
            <person name="Drysdale R.A."/>
            <person name="Harris N.L."/>
            <person name="Richter J."/>
            <person name="Russo S."/>
            <person name="Schroeder A.J."/>
            <person name="Shu S.Q."/>
            <person name="Stapleton M."/>
            <person name="Yamada C."/>
            <person name="Ashburner M."/>
            <person name="Gelbart W.M."/>
            <person name="Rubin G.M."/>
            <person name="Lewis S.E."/>
        </authorList>
    </citation>
    <scope>GENOME REANNOTATION</scope>
    <source>
        <strain>Berkeley</strain>
    </source>
</reference>
<reference key="3">
    <citation type="submission" date="2003-02" db="EMBL/GenBank/DDBJ databases">
        <authorList>
            <person name="Stapleton M."/>
            <person name="Brokstein P."/>
            <person name="Hong L."/>
            <person name="Agbayani A."/>
            <person name="Carlson J.W."/>
            <person name="Champe M."/>
            <person name="Chavez C."/>
            <person name="Dorsett V."/>
            <person name="Dresnek D."/>
            <person name="Farfan D."/>
            <person name="Frise E."/>
            <person name="George R.A."/>
            <person name="Gonzalez M."/>
            <person name="Guarin H."/>
            <person name="Kronmiller B."/>
            <person name="Li P.W."/>
            <person name="Liao G."/>
            <person name="Miranda A."/>
            <person name="Mungall C.J."/>
            <person name="Nunoo J."/>
            <person name="Pacleb J.M."/>
            <person name="Paragas V."/>
            <person name="Park S."/>
            <person name="Patel S."/>
            <person name="Phouanenavong S."/>
            <person name="Wan K.H."/>
            <person name="Yu C."/>
            <person name="Lewis S.E."/>
            <person name="Rubin G.M."/>
            <person name="Celniker S.E."/>
        </authorList>
    </citation>
    <scope>NUCLEOTIDE SEQUENCE [LARGE SCALE MRNA]</scope>
    <source>
        <strain>Berkeley</strain>
        <tissue>Embryo</tissue>
    </source>
</reference>
<reference key="4">
    <citation type="journal article" date="2001" name="Mol. Cell. Biol.">
        <title>Drosophila Mediator complex is broadly utilized by diverse gene-specific transcription factors at different types of core promoters.</title>
        <authorList>
            <person name="Park J.M."/>
            <person name="Gim B.S."/>
            <person name="Kim J.M."/>
            <person name="Yoon J.H."/>
            <person name="Kim H.-S."/>
            <person name="Kang J.-G."/>
            <person name="Kim Y.-J."/>
        </authorList>
    </citation>
    <scope>DEVELOPMENTAL STAGE</scope>
</reference>
<reference key="5">
    <citation type="journal article" date="2002" name="J. Biol. Chem.">
        <title>Novel Mediator proteins of the small Mediator complex in Drosophila SL2 cells.</title>
        <authorList>
            <person name="Gu J.-Y."/>
            <person name="Park J.M."/>
            <person name="Song E.J."/>
            <person name="Mizuguchi G."/>
            <person name="Yoon J.H."/>
            <person name="Kim-Ha J."/>
            <person name="Lee K.-J."/>
            <person name="Kim Y.-J."/>
        </authorList>
    </citation>
    <scope>IDENTIFICATION BY MASS SPECTROMETRY</scope>
    <scope>IDENTIFICATION IN THE MEDIATOR COMPLEX</scope>
    <scope>FUNCTION OF THE MEDIATOR COMPLEX</scope>
</reference>
<reference key="6">
    <citation type="journal article" date="2006" name="Genes Dev.">
        <title>Coactivator cross-talk specifies transcriptional output.</title>
        <authorList>
            <person name="Marr M.T. II"/>
            <person name="Isogai Y."/>
            <person name="Wright K.J."/>
            <person name="Tjian R."/>
        </authorList>
    </citation>
    <scope>FUNCTION</scope>
</reference>
<feature type="chain" id="PRO_0000305018" description="Mediator of RNA polymerase II transcription subunit 27">
    <location>
        <begin position="1"/>
        <end position="293"/>
    </location>
</feature>
<proteinExistence type="evidence at protein level"/>
<comment type="function">
    <text evidence="3 4">Component of the Mediator complex, a coactivator involved in the regulated transcription of nearly all RNA polymerase II-dependent genes. Mediator functions as a bridge to convey information from gene-specific regulatory proteins to the basal RNA polymerase II transcription machinery. Mediator is recruited to promoters by direct interactions with regulatory proteins and serves as a scaffold for the assembly of a functional preinitiation complex with RNA polymerase II and the general transcription factors. Required for activated transcription of the MtnA gene.</text>
</comment>
<comment type="subunit">
    <text evidence="3">Component of the Mediator complex, which includes at least CDK8, MED4, MED6, MED11, MED14, MED17, MED18, MED20, MED21, MED22, MED27, MED28, MED30 and MED31.</text>
</comment>
<comment type="subcellular location">
    <subcellularLocation>
        <location evidence="1">Nucleus</location>
    </subcellularLocation>
</comment>
<comment type="developmental stage">
    <text evidence="2">Maternally encoded. Expression decreases during larval stages then rises during mid-pupal metamorphosis.</text>
</comment>
<comment type="similarity">
    <text evidence="5">Belongs to the Mediator complex subunit 27 family.</text>
</comment>
<name>MED27_DROME</name>
<keyword id="KW-0010">Activator</keyword>
<keyword id="KW-0539">Nucleus</keyword>
<keyword id="KW-1185">Reference proteome</keyword>
<keyword id="KW-0804">Transcription</keyword>
<keyword id="KW-0805">Transcription regulation</keyword>
<organism>
    <name type="scientific">Drosophila melanogaster</name>
    <name type="common">Fruit fly</name>
    <dbReference type="NCBI Taxonomy" id="7227"/>
    <lineage>
        <taxon>Eukaryota</taxon>
        <taxon>Metazoa</taxon>
        <taxon>Ecdysozoa</taxon>
        <taxon>Arthropoda</taxon>
        <taxon>Hexapoda</taxon>
        <taxon>Insecta</taxon>
        <taxon>Pterygota</taxon>
        <taxon>Neoptera</taxon>
        <taxon>Endopterygota</taxon>
        <taxon>Diptera</taxon>
        <taxon>Brachycera</taxon>
        <taxon>Muscomorpha</taxon>
        <taxon>Ephydroidea</taxon>
        <taxon>Drosophilidae</taxon>
        <taxon>Drosophila</taxon>
        <taxon>Sophophora</taxon>
    </lineage>
</organism>
<protein>
    <recommendedName>
        <fullName>Mediator of RNA polymerase II transcription subunit 27</fullName>
    </recommendedName>
    <alternativeName>
        <fullName>Mediator complex subunit 27</fullName>
    </alternativeName>
    <alternativeName>
        <fullName>dCRSP34</fullName>
    </alternativeName>
    <alternativeName>
        <fullName>dMED27</fullName>
    </alternativeName>
    <alternativeName>
        <fullName>dTRAP37</fullName>
    </alternativeName>
</protein>
<sequence>MDKLNSTLTAVKNLRSNVRLCFEHLADGTDGESGEESRNKFVNDFQERFAAINSQIREVEQLINGLPVPPTPYSLGNTAYLAQETSQDRQALYPQLVNSYKWMDKVHDHSFLAFNNLNQNTLRRSYNYCSQKRQRLPFSSFNNDPDHIDKLLSEINTPPHTSYRIFRPFGTNAVTIVTISNVMKAAIVFKGVLIEWVTVKGFDEPLEHDDLWAESRYEVFRKVQDHAHSAMLHFFSPTLPDLAVKSYITWLNSHVKLFLEPCKRCGKFVVNGLPPTWRDLRTLEPFHEDCRNC</sequence>
<accession>Q9VNG0</accession>